<organism>
    <name type="scientific">Micrococcus luteus (strain ATCC 4698 / DSM 20030 / JCM 1464 / CCM 169 / CCUG 5858 / IAM 1056 / NBRC 3333 / NCIMB 9278 / NCTC 2665 / VKM Ac-2230)</name>
    <name type="common">Micrococcus lysodeikticus</name>
    <dbReference type="NCBI Taxonomy" id="465515"/>
    <lineage>
        <taxon>Bacteria</taxon>
        <taxon>Bacillati</taxon>
        <taxon>Actinomycetota</taxon>
        <taxon>Actinomycetes</taxon>
        <taxon>Micrococcales</taxon>
        <taxon>Micrococcaceae</taxon>
        <taxon>Micrococcus</taxon>
    </lineage>
</organism>
<feature type="chain" id="PRO_1000214958" description="Large ribosomal subunit protein uL13">
    <location>
        <begin position="1"/>
        <end position="147"/>
    </location>
</feature>
<name>RL13_MICLC</name>
<proteinExistence type="inferred from homology"/>
<accession>C5CC33</accession>
<sequence>MRTYSPKPGDADRQWHIIDATDVVLGRLASHTATLLRGKHKPTFAPHMDMGDYVIIVNAEKVALTGAKLEKKRAYRHSGYPGGLKSQSYAELLETNPVRAVEKAVKGMLPKNSLAAQQLSKLKVYKGAEHPHTAQQPQTFEIGQVAQ</sequence>
<dbReference type="EMBL" id="CP001628">
    <property type="protein sequence ID" value="ACS31174.1"/>
    <property type="molecule type" value="Genomic_DNA"/>
</dbReference>
<dbReference type="RefSeq" id="WP_002857519.1">
    <property type="nucleotide sequence ID" value="NZ_WBMF01000001.1"/>
</dbReference>
<dbReference type="SMR" id="C5CC33"/>
<dbReference type="STRING" id="465515.Mlut_16870"/>
<dbReference type="EnsemblBacteria" id="ACS31174">
    <property type="protein sequence ID" value="ACS31174"/>
    <property type="gene ID" value="Mlut_16870"/>
</dbReference>
<dbReference type="GeneID" id="93364299"/>
<dbReference type="KEGG" id="mlu:Mlut_16870"/>
<dbReference type="eggNOG" id="COG0102">
    <property type="taxonomic scope" value="Bacteria"/>
</dbReference>
<dbReference type="HOGENOM" id="CLU_082184_2_2_11"/>
<dbReference type="Proteomes" id="UP000000738">
    <property type="component" value="Chromosome"/>
</dbReference>
<dbReference type="GO" id="GO:0022625">
    <property type="term" value="C:cytosolic large ribosomal subunit"/>
    <property type="evidence" value="ECO:0007669"/>
    <property type="project" value="TreeGrafter"/>
</dbReference>
<dbReference type="GO" id="GO:0003729">
    <property type="term" value="F:mRNA binding"/>
    <property type="evidence" value="ECO:0007669"/>
    <property type="project" value="TreeGrafter"/>
</dbReference>
<dbReference type="GO" id="GO:0003735">
    <property type="term" value="F:structural constituent of ribosome"/>
    <property type="evidence" value="ECO:0007669"/>
    <property type="project" value="InterPro"/>
</dbReference>
<dbReference type="GO" id="GO:0017148">
    <property type="term" value="P:negative regulation of translation"/>
    <property type="evidence" value="ECO:0007669"/>
    <property type="project" value="TreeGrafter"/>
</dbReference>
<dbReference type="GO" id="GO:0006412">
    <property type="term" value="P:translation"/>
    <property type="evidence" value="ECO:0007669"/>
    <property type="project" value="UniProtKB-UniRule"/>
</dbReference>
<dbReference type="CDD" id="cd00392">
    <property type="entry name" value="Ribosomal_L13"/>
    <property type="match status" value="1"/>
</dbReference>
<dbReference type="FunFam" id="3.90.1180.10:FF:000001">
    <property type="entry name" value="50S ribosomal protein L13"/>
    <property type="match status" value="1"/>
</dbReference>
<dbReference type="Gene3D" id="3.90.1180.10">
    <property type="entry name" value="Ribosomal protein L13"/>
    <property type="match status" value="1"/>
</dbReference>
<dbReference type="HAMAP" id="MF_01366">
    <property type="entry name" value="Ribosomal_uL13"/>
    <property type="match status" value="1"/>
</dbReference>
<dbReference type="InterPro" id="IPR005822">
    <property type="entry name" value="Ribosomal_uL13"/>
</dbReference>
<dbReference type="InterPro" id="IPR005823">
    <property type="entry name" value="Ribosomal_uL13_bac-type"/>
</dbReference>
<dbReference type="InterPro" id="IPR036899">
    <property type="entry name" value="Ribosomal_uL13_sf"/>
</dbReference>
<dbReference type="NCBIfam" id="TIGR01066">
    <property type="entry name" value="rplM_bact"/>
    <property type="match status" value="1"/>
</dbReference>
<dbReference type="PANTHER" id="PTHR11545:SF2">
    <property type="entry name" value="LARGE RIBOSOMAL SUBUNIT PROTEIN UL13M"/>
    <property type="match status" value="1"/>
</dbReference>
<dbReference type="PANTHER" id="PTHR11545">
    <property type="entry name" value="RIBOSOMAL PROTEIN L13"/>
    <property type="match status" value="1"/>
</dbReference>
<dbReference type="Pfam" id="PF00572">
    <property type="entry name" value="Ribosomal_L13"/>
    <property type="match status" value="1"/>
</dbReference>
<dbReference type="PIRSF" id="PIRSF002181">
    <property type="entry name" value="Ribosomal_L13"/>
    <property type="match status" value="1"/>
</dbReference>
<dbReference type="SUPFAM" id="SSF52161">
    <property type="entry name" value="Ribosomal protein L13"/>
    <property type="match status" value="1"/>
</dbReference>
<evidence type="ECO:0000255" key="1">
    <source>
        <dbReference type="HAMAP-Rule" id="MF_01366"/>
    </source>
</evidence>
<evidence type="ECO:0000305" key="2"/>
<comment type="function">
    <text evidence="1">This protein is one of the early assembly proteins of the 50S ribosomal subunit, although it is not seen to bind rRNA by itself. It is important during the early stages of 50S assembly.</text>
</comment>
<comment type="subunit">
    <text evidence="1">Part of the 50S ribosomal subunit.</text>
</comment>
<comment type="similarity">
    <text evidence="1">Belongs to the universal ribosomal protein uL13 family.</text>
</comment>
<keyword id="KW-1185">Reference proteome</keyword>
<keyword id="KW-0687">Ribonucleoprotein</keyword>
<keyword id="KW-0689">Ribosomal protein</keyword>
<protein>
    <recommendedName>
        <fullName evidence="1">Large ribosomal subunit protein uL13</fullName>
    </recommendedName>
    <alternativeName>
        <fullName evidence="2">50S ribosomal protein L13</fullName>
    </alternativeName>
</protein>
<reference key="1">
    <citation type="journal article" date="2010" name="J. Bacteriol.">
        <title>Genome sequence of the Fleming strain of Micrococcus luteus, a simple free-living actinobacterium.</title>
        <authorList>
            <person name="Young M."/>
            <person name="Artsatbanov V."/>
            <person name="Beller H.R."/>
            <person name="Chandra G."/>
            <person name="Chater K.F."/>
            <person name="Dover L.G."/>
            <person name="Goh E.B."/>
            <person name="Kahan T."/>
            <person name="Kaprelyants A.S."/>
            <person name="Kyrpides N."/>
            <person name="Lapidus A."/>
            <person name="Lowry S.R."/>
            <person name="Lykidis A."/>
            <person name="Mahillon J."/>
            <person name="Markowitz V."/>
            <person name="Mavromatis K."/>
            <person name="Mukamolova G.V."/>
            <person name="Oren A."/>
            <person name="Rokem J.S."/>
            <person name="Smith M.C."/>
            <person name="Young D.I."/>
            <person name="Greenblatt C.L."/>
        </authorList>
    </citation>
    <scope>NUCLEOTIDE SEQUENCE [LARGE SCALE GENOMIC DNA]</scope>
    <source>
        <strain>ATCC 4698 / DSM 20030 / JCM 1464 / CCM 169 / CCUG 5858 / IAM 1056 / NBRC 3333 / NCIMB 9278 / NCTC 2665 / VKM Ac-2230</strain>
    </source>
</reference>
<gene>
    <name evidence="1" type="primary">rplM</name>
    <name type="ordered locus">Mlut_16870</name>
</gene>